<organism>
    <name type="scientific">Staphylococcus aureus (strain MRSA252)</name>
    <dbReference type="NCBI Taxonomy" id="282458"/>
    <lineage>
        <taxon>Bacteria</taxon>
        <taxon>Bacillati</taxon>
        <taxon>Bacillota</taxon>
        <taxon>Bacilli</taxon>
        <taxon>Bacillales</taxon>
        <taxon>Staphylococcaceae</taxon>
        <taxon>Staphylococcus</taxon>
    </lineage>
</organism>
<proteinExistence type="inferred from homology"/>
<accession>Q6GHX9</accession>
<evidence type="ECO:0000255" key="1">
    <source>
        <dbReference type="HAMAP-Rule" id="MF_01851"/>
    </source>
</evidence>
<comment type="similarity">
    <text evidence="1">Belongs to the UPF0637 family.</text>
</comment>
<name>Y1080_STAAR</name>
<feature type="chain" id="PRO_0000348323" description="UPF0637 protein SAR1080">
    <location>
        <begin position="1"/>
        <end position="204"/>
    </location>
</feature>
<protein>
    <recommendedName>
        <fullName evidence="1">UPF0637 protein SAR1080</fullName>
    </recommendedName>
</protein>
<gene>
    <name type="ordered locus">SAR1080</name>
</gene>
<dbReference type="EMBL" id="BX571856">
    <property type="protein sequence ID" value="CAG40082.1"/>
    <property type="molecule type" value="Genomic_DNA"/>
</dbReference>
<dbReference type="RefSeq" id="WP_000170612.1">
    <property type="nucleotide sequence ID" value="NC_002952.2"/>
</dbReference>
<dbReference type="SMR" id="Q6GHX9"/>
<dbReference type="KEGG" id="sar:SAR1080"/>
<dbReference type="HOGENOM" id="CLU_096059_0_0_9"/>
<dbReference type="Proteomes" id="UP000000596">
    <property type="component" value="Chromosome"/>
</dbReference>
<dbReference type="Gene3D" id="3.30.930.20">
    <property type="entry name" value="Protein of unknown function DUF1054"/>
    <property type="match status" value="1"/>
</dbReference>
<dbReference type="HAMAP" id="MF_01851">
    <property type="entry name" value="UPF0637"/>
    <property type="match status" value="1"/>
</dbReference>
<dbReference type="InterPro" id="IPR009403">
    <property type="entry name" value="UPF0637"/>
</dbReference>
<dbReference type="InterPro" id="IPR053707">
    <property type="entry name" value="UPF0637_domain_sf"/>
</dbReference>
<dbReference type="Pfam" id="PF06335">
    <property type="entry name" value="DUF1054"/>
    <property type="match status" value="1"/>
</dbReference>
<dbReference type="PIRSF" id="PIRSF021332">
    <property type="entry name" value="DUF1054"/>
    <property type="match status" value="1"/>
</dbReference>
<dbReference type="SUPFAM" id="SSF142913">
    <property type="entry name" value="YktB/PF0168-like"/>
    <property type="match status" value="1"/>
</dbReference>
<reference key="1">
    <citation type="journal article" date="2004" name="Proc. Natl. Acad. Sci. U.S.A.">
        <title>Complete genomes of two clinical Staphylococcus aureus strains: evidence for the rapid evolution of virulence and drug resistance.</title>
        <authorList>
            <person name="Holden M.T.G."/>
            <person name="Feil E.J."/>
            <person name="Lindsay J.A."/>
            <person name="Peacock S.J."/>
            <person name="Day N.P.J."/>
            <person name="Enright M.C."/>
            <person name="Foster T.J."/>
            <person name="Moore C.E."/>
            <person name="Hurst L."/>
            <person name="Atkin R."/>
            <person name="Barron A."/>
            <person name="Bason N."/>
            <person name="Bentley S.D."/>
            <person name="Chillingworth C."/>
            <person name="Chillingworth T."/>
            <person name="Churcher C."/>
            <person name="Clark L."/>
            <person name="Corton C."/>
            <person name="Cronin A."/>
            <person name="Doggett J."/>
            <person name="Dowd L."/>
            <person name="Feltwell T."/>
            <person name="Hance Z."/>
            <person name="Harris B."/>
            <person name="Hauser H."/>
            <person name="Holroyd S."/>
            <person name="Jagels K."/>
            <person name="James K.D."/>
            <person name="Lennard N."/>
            <person name="Line A."/>
            <person name="Mayes R."/>
            <person name="Moule S."/>
            <person name="Mungall K."/>
            <person name="Ormond D."/>
            <person name="Quail M.A."/>
            <person name="Rabbinowitsch E."/>
            <person name="Rutherford K.M."/>
            <person name="Sanders M."/>
            <person name="Sharp S."/>
            <person name="Simmonds M."/>
            <person name="Stevens K."/>
            <person name="Whitehead S."/>
            <person name="Barrell B.G."/>
            <person name="Spratt B.G."/>
            <person name="Parkhill J."/>
        </authorList>
    </citation>
    <scope>NUCLEOTIDE SEQUENCE [LARGE SCALE GENOMIC DNA]</scope>
    <source>
        <strain>MRSA252</strain>
    </source>
</reference>
<sequence>MTKYTFKPKDFKAFNVEGLDARMEAVNEYIRPQLHELGEYFSDFFTSQTGETFYPHVAKHARRSVNPPKDTWVAFATSKRGYKMLPHFQIGMFEDQLFVMFGIMHEAKDKATRAKVFERKFKAIQQLPDDYRVCLDHMKPDKPFIKDLTDDDLKEAIQRAINVKKGEFFIARAITPQDKRLKSDKAFIAFLEETFDQFLPFYSA</sequence>